<feature type="chain" id="PRO_0000086367" description="Dual specificity mitogen-activated protein kinase kinase 1">
    <location>
        <begin position="1"/>
        <end position="393"/>
    </location>
</feature>
<feature type="domain" description="Protein kinase" evidence="6">
    <location>
        <begin position="68"/>
        <end position="361"/>
    </location>
</feature>
<feature type="region of interest" description="Disordered" evidence="7">
    <location>
        <begin position="1"/>
        <end position="27"/>
    </location>
</feature>
<feature type="region of interest" description="RAF1-binding" evidence="1">
    <location>
        <begin position="270"/>
        <end position="307"/>
    </location>
</feature>
<feature type="active site" description="Proton acceptor" evidence="6">
    <location>
        <position position="190"/>
    </location>
</feature>
<feature type="binding site" evidence="6">
    <location>
        <begin position="74"/>
        <end position="82"/>
    </location>
    <ligand>
        <name>ATP</name>
        <dbReference type="ChEBI" id="CHEBI:30616"/>
    </ligand>
</feature>
<feature type="binding site">
    <location>
        <position position="97"/>
    </location>
    <ligand>
        <name>ATP</name>
        <dbReference type="ChEBI" id="CHEBI:30616"/>
    </ligand>
</feature>
<feature type="site" description="Cleavage; by anthrax lethal factor" evidence="1">
    <location>
        <begin position="8"/>
        <end position="9"/>
    </location>
</feature>
<feature type="modified residue" description="Phosphoserine; by RAF" evidence="5">
    <location>
        <position position="218"/>
    </location>
</feature>
<feature type="modified residue" description="Phosphoserine; by RAF" evidence="5">
    <location>
        <position position="222"/>
    </location>
</feature>
<feature type="modified residue" description="Phosphothreonine" evidence="5">
    <location>
        <position position="286"/>
    </location>
</feature>
<feature type="modified residue" description="Phosphothreonine; by MAPK1" evidence="4">
    <location>
        <position position="292"/>
    </location>
</feature>
<feature type="modified residue" description="Phosphoserine; by PAK" evidence="5">
    <location>
        <position position="298"/>
    </location>
</feature>
<comment type="function">
    <text evidence="1 5">Dual specificity protein kinase which acts as an essential component of the MAP kinase signal transduction pathway. Binding of extracellular ligands such as growth factors, cytokines and hormones to their cell-surface receptors activates RAS and this initiates RAF1 activation. RAF1 then further activates the dual-specificity protein kinases MAP2K1/MEK1 and MAP2K2/MEK2. Both MAP2K1/MEK1 and MAP2K2/MEK2 function specifically in the MAPK/ERK cascade, and catalyze the concomitant phosphorylation of a threonine and a tyrosine residue in a Thr-Glu-Tyr sequence located in the extracellular signal-regulated kinases MAPK3/ERK1 and MAPK1/ERK2, leading to their activation and further transduction of the signal within the MAPK/ERK cascade. Activates BRAF in a KSR1 or KSR2-dependent manner; by binding to KSR1 or KSR2 releases the inhibitory intramolecular interaction between KSR1 or KSR2 protein kinase and N-terminal domains which promotes KSR1 or KSR2-BRAF dimerization and BRAF activation (By similarity). Depending on the cellular context, this pathway mediates diverse biological functions such as cell growth, adhesion, survival and differentiation, predominantly through the regulation of transcription, metabolism and cytoskeletal rearrangements. One target of the MAPK/ERK cascade is peroxisome proliferator-activated receptor gamma (PPARG), a nuclear receptor that promotes differentiation and apoptosis. MAP2K1/MEK1 has been shown to export PPARG from the nucleus. The MAPK/ERK cascade is also involved in the regulation of endosomal dynamics, including lysosome processing and endosome cycling through the perinuclear recycling compartment (PNRC), as well as in the fragmentation of the Golgi apparatus during mitosis (By similarity).</text>
</comment>
<comment type="catalytic activity">
    <reaction>
        <text>L-seryl-[protein] + ATP = O-phospho-L-seryl-[protein] + ADP + H(+)</text>
        <dbReference type="Rhea" id="RHEA:17989"/>
        <dbReference type="Rhea" id="RHEA-COMP:9863"/>
        <dbReference type="Rhea" id="RHEA-COMP:11604"/>
        <dbReference type="ChEBI" id="CHEBI:15378"/>
        <dbReference type="ChEBI" id="CHEBI:29999"/>
        <dbReference type="ChEBI" id="CHEBI:30616"/>
        <dbReference type="ChEBI" id="CHEBI:83421"/>
        <dbReference type="ChEBI" id="CHEBI:456216"/>
        <dbReference type="EC" id="2.7.12.2"/>
    </reaction>
</comment>
<comment type="catalytic activity">
    <reaction>
        <text>L-threonyl-[protein] + ATP = O-phospho-L-threonyl-[protein] + ADP + H(+)</text>
        <dbReference type="Rhea" id="RHEA:46608"/>
        <dbReference type="Rhea" id="RHEA-COMP:11060"/>
        <dbReference type="Rhea" id="RHEA-COMP:11605"/>
        <dbReference type="ChEBI" id="CHEBI:15378"/>
        <dbReference type="ChEBI" id="CHEBI:30013"/>
        <dbReference type="ChEBI" id="CHEBI:30616"/>
        <dbReference type="ChEBI" id="CHEBI:61977"/>
        <dbReference type="ChEBI" id="CHEBI:456216"/>
        <dbReference type="EC" id="2.7.12.2"/>
    </reaction>
</comment>
<comment type="catalytic activity">
    <reaction>
        <text>L-tyrosyl-[protein] + ATP = O-phospho-L-tyrosyl-[protein] + ADP + H(+)</text>
        <dbReference type="Rhea" id="RHEA:10596"/>
        <dbReference type="Rhea" id="RHEA-COMP:10136"/>
        <dbReference type="Rhea" id="RHEA-COMP:20101"/>
        <dbReference type="ChEBI" id="CHEBI:15378"/>
        <dbReference type="ChEBI" id="CHEBI:30616"/>
        <dbReference type="ChEBI" id="CHEBI:46858"/>
        <dbReference type="ChEBI" id="CHEBI:61978"/>
        <dbReference type="ChEBI" id="CHEBI:456216"/>
        <dbReference type="EC" id="2.7.12.2"/>
    </reaction>
</comment>
<comment type="activity regulation">
    <text evidence="4 5">Ras proteins such as HRAS mediate the activation of RAF proteins such as RAF1 or BRAF which in turn activate extracellular signal-regulated kinases (ERK) through MAPK (mitogen-activated protein kinases) and ERK kinases MAP2K1/MEK1 and MAP2K2/MEK2. Activation occurs through phosphorylation of Ser-218 and Ser-222 (By similarity). MAP2K1/MEK1 binds KSR1 or KSR2 releasing the inhibitory intramolecular interaction between KSR1 or KSR2 protein kinase and N-terminal domains (By similarity). This allows KSR1 or KSR2 dimerization with BRAF leading to BRAF activation and phosphorylation of MAP2K1 (By similarity). MAP2K1/MEK1 is also the target of negative feed-back regulation by its substrate kinases, such as MAPK1/ERK2. These phosphorylate MAP2K1/MEK1 on Thr-292, thereby facilitating dephosphorylation of the activating residues Ser-218 and Ser-222. Inhibited by serine/threonine phosphatase 2A (By similarity).</text>
</comment>
<comment type="subunit">
    <text evidence="2 3 4 5">Found in a complex with at least BRAF, HRAS, MAP2K1, MAPK3/ERK1 and RGS14 (By similarity). Forms a heterodimer with MAP2K2/MEK2 (By similarity). Forms heterodimers with KSR2 which further dimerize to form tetramers (By similarity). Interacts with KSR1 or KSR2 and BRAF; the interaction with KSR1 or KSR2 mediates KSR1-BRAF or KSR2-BRAF dimerization (By similarity). Interacts with ARBB2, LAMTOR3, MAPK1/ERK2 and RAF1 (By similarity). Interacts with MAPK1/ERK2 (By similarity). Interacts with MORG1 (By similarity). Interacts with PPARG. Interacts with isoform 1 of VRK2. Interacts with SGK1. Interacts with BIRC6/bruce (By similarity). Interacts with KAT7; the interaction promotes KAT7 phosphorylation (By similarity). Interacts with RAF1 and NEK10; the interaction is required for ERK1/2-signaling pathway activation in response to UV irradiation (By similarity). Interacts with TRAF3IP3 (By similarity). Interacts with MOS (By similarity).</text>
</comment>
<comment type="subcellular location">
    <subcellularLocation>
        <location evidence="5">Cytoplasm</location>
        <location evidence="5">Cytoskeleton</location>
        <location evidence="5">Microtubule organizing center</location>
        <location evidence="5">Centrosome</location>
    </subcellularLocation>
    <subcellularLocation>
        <location evidence="5">Cytoplasm</location>
        <location evidence="5">Cytoskeleton</location>
        <location evidence="5">Microtubule organizing center</location>
        <location evidence="5">Spindle pole body</location>
    </subcellularLocation>
    <subcellularLocation>
        <location evidence="5">Cytoplasm</location>
    </subcellularLocation>
    <subcellularLocation>
        <location evidence="5">Nucleus</location>
    </subcellularLocation>
    <subcellularLocation>
        <location evidence="5">Membrane</location>
        <topology evidence="5">Peripheral membrane protein</topology>
    </subcellularLocation>
    <text evidence="5">Localizes at centrosomes during prometaphase, midzone during anaphase and midbody during telophase/cytokinesis. Membrane localization is probably regulated by its interaction with KSR1.</text>
</comment>
<comment type="domain">
    <text evidence="1">The proline-rich region localized between residues 270 and 307 is important for the binding to RAF1 and activation of MAP2K1/MEK1.</text>
</comment>
<comment type="PTM">
    <text evidence="5">Phosphorylation at Ser-218 and Ser-222 by MAP kinase kinase kinases (BRAF or MEKK1) positively regulates the kinase activity (By similarity). Also phosphorylated at Thr-292 by MAPK1/ERK2 and at Ser-298 by PAK (By similarity). MAPK1/ERK2 phosphorylation of Thr-292 occurs in response to cellular adhesion and leads to inhibition of Ser-298 phosphorylation by PAK (By similarity). Autophosphorylated at Ser-218 and Ser-222, autophosphosphorylation is promoted by NEK10 following UV irradiation (By similarity).</text>
</comment>
<comment type="similarity">
    <text evidence="8">Belongs to the protein kinase superfamily. STE Ser/Thr protein kinase family. MAP kinase kinase subfamily.</text>
</comment>
<accession>Q9XT09</accession>
<reference key="1">
    <citation type="submission" date="1999-04" db="EMBL/GenBank/DDBJ databases">
        <title>P. troglodytes mitogen-activated protein kinase kinase.</title>
        <authorList>
            <person name="Stockand J.D."/>
            <person name="Al-Khalili O."/>
            <person name="Spier B.J."/>
            <person name="Eaton D.C."/>
        </authorList>
    </citation>
    <scope>NUCLEOTIDE SEQUENCE [MRNA]</scope>
</reference>
<protein>
    <recommendedName>
        <fullName>Dual specificity mitogen-activated protein kinase kinase 1</fullName>
        <shortName>MAP kinase kinase 1</shortName>
        <shortName>MAPKK 1</shortName>
        <ecNumber>2.7.12.2</ecNumber>
    </recommendedName>
    <alternativeName>
        <fullName>ERK activator kinase 1</fullName>
    </alternativeName>
    <alternativeName>
        <fullName>MAPK/ERK kinase 1</fullName>
        <shortName>MEK 1</shortName>
    </alternativeName>
</protein>
<evidence type="ECO:0000250" key="1"/>
<evidence type="ECO:0000250" key="2">
    <source>
        <dbReference type="UniProtKB" id="P29678"/>
    </source>
</evidence>
<evidence type="ECO:0000250" key="3">
    <source>
        <dbReference type="UniProtKB" id="P31938"/>
    </source>
</evidence>
<evidence type="ECO:0000250" key="4">
    <source>
        <dbReference type="UniProtKB" id="Q01986"/>
    </source>
</evidence>
<evidence type="ECO:0000250" key="5">
    <source>
        <dbReference type="UniProtKB" id="Q02750"/>
    </source>
</evidence>
<evidence type="ECO:0000255" key="6">
    <source>
        <dbReference type="PROSITE-ProRule" id="PRU00159"/>
    </source>
</evidence>
<evidence type="ECO:0000256" key="7">
    <source>
        <dbReference type="SAM" id="MobiDB-lite"/>
    </source>
</evidence>
<evidence type="ECO:0000305" key="8"/>
<proteinExistence type="evidence at transcript level"/>
<keyword id="KW-0067">ATP-binding</keyword>
<keyword id="KW-0963">Cytoplasm</keyword>
<keyword id="KW-0206">Cytoskeleton</keyword>
<keyword id="KW-0418">Kinase</keyword>
<keyword id="KW-0472">Membrane</keyword>
<keyword id="KW-0547">Nucleotide-binding</keyword>
<keyword id="KW-0539">Nucleus</keyword>
<keyword id="KW-0597">Phosphoprotein</keyword>
<keyword id="KW-1185">Reference proteome</keyword>
<keyword id="KW-0723">Serine/threonine-protein kinase</keyword>
<keyword id="KW-0808">Transferase</keyword>
<keyword id="KW-0829">Tyrosine-protein kinase</keyword>
<sequence>MPKKKPTPIQLNPAPDGSAVNGTSSAETNLEALQKKLEELELDEQQRKRLEAFLTQKQKVGELKDDDFEKISELGAGNGGVVFKVSHKPSGLVMARKLIHLEIKPAIRNQIIRELQVLHECNSPYIVGFYGAFYSDGEISICMEHMDGGSLDQVLKKAGRIPEQILGKVSIAVIKGLTYLREKHKIMHRDVQPSNILVNSRGEIKLCDFGVSGQLIDSMANSFVGTRSYMSPERFQGTHYSVQSDIWSMGLSPVEMAVGRYPIPSPDAKELELMFGCQVEGDAAETPPRPRTPGRPLSSYGMDSRPPMAIFELLDYIVNEPPPKLPSGVFSLEFQDFVNKCLIKNPAERADLKQLMVHAFIKRSDAEEVDFAGWLCSTIGLNQPSTPTHAAGV</sequence>
<organism>
    <name type="scientific">Pan troglodytes</name>
    <name type="common">Chimpanzee</name>
    <dbReference type="NCBI Taxonomy" id="9598"/>
    <lineage>
        <taxon>Eukaryota</taxon>
        <taxon>Metazoa</taxon>
        <taxon>Chordata</taxon>
        <taxon>Craniata</taxon>
        <taxon>Vertebrata</taxon>
        <taxon>Euteleostomi</taxon>
        <taxon>Mammalia</taxon>
        <taxon>Eutheria</taxon>
        <taxon>Euarchontoglires</taxon>
        <taxon>Primates</taxon>
        <taxon>Haplorrhini</taxon>
        <taxon>Catarrhini</taxon>
        <taxon>Hominidae</taxon>
        <taxon>Pan</taxon>
    </lineage>
</organism>
<name>MP2K1_PANTR</name>
<dbReference type="EC" id="2.7.12.2"/>
<dbReference type="EMBL" id="AF143201">
    <property type="protein sequence ID" value="AAD33901.1"/>
    <property type="molecule type" value="mRNA"/>
</dbReference>
<dbReference type="RefSeq" id="NP_001009071.1">
    <property type="nucleotide sequence ID" value="NM_001009071.1"/>
</dbReference>
<dbReference type="SMR" id="Q9XT09"/>
<dbReference type="STRING" id="9598.ENSPTRP00000063228"/>
<dbReference type="PaxDb" id="9598-ENSPTRP00000012302"/>
<dbReference type="GeneID" id="450188"/>
<dbReference type="KEGG" id="ptr:450188"/>
<dbReference type="CTD" id="5604"/>
<dbReference type="eggNOG" id="KOG0581">
    <property type="taxonomic scope" value="Eukaryota"/>
</dbReference>
<dbReference type="InParanoid" id="Q9XT09"/>
<dbReference type="OrthoDB" id="7022at9604"/>
<dbReference type="Proteomes" id="UP000002277">
    <property type="component" value="Unplaced"/>
</dbReference>
<dbReference type="GO" id="GO:0070161">
    <property type="term" value="C:anchoring junction"/>
    <property type="evidence" value="ECO:0007669"/>
    <property type="project" value="UniProtKB-ARBA"/>
</dbReference>
<dbReference type="GO" id="GO:0005813">
    <property type="term" value="C:centrosome"/>
    <property type="evidence" value="ECO:0007669"/>
    <property type="project" value="UniProtKB-SubCell"/>
</dbReference>
<dbReference type="GO" id="GO:0016020">
    <property type="term" value="C:membrane"/>
    <property type="evidence" value="ECO:0007669"/>
    <property type="project" value="UniProtKB-SubCell"/>
</dbReference>
<dbReference type="GO" id="GO:0005739">
    <property type="term" value="C:mitochondrion"/>
    <property type="evidence" value="ECO:0007669"/>
    <property type="project" value="UniProtKB-ARBA"/>
</dbReference>
<dbReference type="GO" id="GO:0005634">
    <property type="term" value="C:nucleus"/>
    <property type="evidence" value="ECO:0007669"/>
    <property type="project" value="UniProtKB-SubCell"/>
</dbReference>
<dbReference type="GO" id="GO:0031982">
    <property type="term" value="C:vesicle"/>
    <property type="evidence" value="ECO:0007669"/>
    <property type="project" value="UniProtKB-ARBA"/>
</dbReference>
<dbReference type="GO" id="GO:0005524">
    <property type="term" value="F:ATP binding"/>
    <property type="evidence" value="ECO:0007669"/>
    <property type="project" value="UniProtKB-KW"/>
</dbReference>
<dbReference type="GO" id="GO:0004708">
    <property type="term" value="F:MAP kinase kinase activity"/>
    <property type="evidence" value="ECO:0000318"/>
    <property type="project" value="GO_Central"/>
</dbReference>
<dbReference type="GO" id="GO:0106310">
    <property type="term" value="F:protein serine kinase activity"/>
    <property type="evidence" value="ECO:0007669"/>
    <property type="project" value="RHEA"/>
</dbReference>
<dbReference type="GO" id="GO:0004674">
    <property type="term" value="F:protein serine/threonine kinase activity"/>
    <property type="evidence" value="ECO:0007669"/>
    <property type="project" value="UniProtKB-KW"/>
</dbReference>
<dbReference type="GO" id="GO:0004713">
    <property type="term" value="F:protein tyrosine kinase activity"/>
    <property type="evidence" value="ECO:0007669"/>
    <property type="project" value="UniProtKB-KW"/>
</dbReference>
<dbReference type="GO" id="GO:0000165">
    <property type="term" value="P:MAPK cascade"/>
    <property type="evidence" value="ECO:0000318"/>
    <property type="project" value="GO_Central"/>
</dbReference>
<dbReference type="GO" id="GO:0030182">
    <property type="term" value="P:neuron differentiation"/>
    <property type="evidence" value="ECO:0000318"/>
    <property type="project" value="GO_Central"/>
</dbReference>
<dbReference type="CDD" id="cd06650">
    <property type="entry name" value="PKc_MEK1"/>
    <property type="match status" value="1"/>
</dbReference>
<dbReference type="FunFam" id="1.10.510.10:FF:000115">
    <property type="entry name" value="Dual specificity mitogen-activated protein kinase kinase 1"/>
    <property type="match status" value="1"/>
</dbReference>
<dbReference type="FunFam" id="3.30.200.20:FF:000100">
    <property type="entry name" value="Dual specificity mitogen-activated protein kinase kinase 1"/>
    <property type="match status" value="1"/>
</dbReference>
<dbReference type="Gene3D" id="3.30.200.20">
    <property type="entry name" value="Phosphorylase Kinase, domain 1"/>
    <property type="match status" value="1"/>
</dbReference>
<dbReference type="Gene3D" id="1.10.510.10">
    <property type="entry name" value="Transferase(Phosphotransferase) domain 1"/>
    <property type="match status" value="1"/>
</dbReference>
<dbReference type="InterPro" id="IPR011009">
    <property type="entry name" value="Kinase-like_dom_sf"/>
</dbReference>
<dbReference type="InterPro" id="IPR050915">
    <property type="entry name" value="MAP_kinase_kinase"/>
</dbReference>
<dbReference type="InterPro" id="IPR000719">
    <property type="entry name" value="Prot_kinase_dom"/>
</dbReference>
<dbReference type="InterPro" id="IPR017441">
    <property type="entry name" value="Protein_kinase_ATP_BS"/>
</dbReference>
<dbReference type="PANTHER" id="PTHR47448">
    <property type="entry name" value="DUAL SPECIFICITY MITOGEN-ACTIVATED PROTEIN KINASE KINASE DSOR1-LIKE PROTEIN"/>
    <property type="match status" value="1"/>
</dbReference>
<dbReference type="PANTHER" id="PTHR47448:SF2">
    <property type="entry name" value="MITOGEN-ACTIVATED PROTEIN KINASE KINASE 1"/>
    <property type="match status" value="1"/>
</dbReference>
<dbReference type="Pfam" id="PF00069">
    <property type="entry name" value="Pkinase"/>
    <property type="match status" value="1"/>
</dbReference>
<dbReference type="SUPFAM" id="SSF56112">
    <property type="entry name" value="Protein kinase-like (PK-like)"/>
    <property type="match status" value="1"/>
</dbReference>
<dbReference type="PROSITE" id="PS00107">
    <property type="entry name" value="PROTEIN_KINASE_ATP"/>
    <property type="match status" value="1"/>
</dbReference>
<dbReference type="PROSITE" id="PS50011">
    <property type="entry name" value="PROTEIN_KINASE_DOM"/>
    <property type="match status" value="1"/>
</dbReference>
<gene>
    <name type="primary">MAP2K1</name>
    <name type="synonym">MEK1</name>
    <name type="synonym">PRKMK1</name>
</gene>